<feature type="chain" id="PRO_0000266897" description="Probable GTP-binding protein EngB">
    <location>
        <begin position="1"/>
        <end position="198"/>
    </location>
</feature>
<feature type="domain" description="EngB-type G" evidence="1">
    <location>
        <begin position="36"/>
        <end position="198"/>
    </location>
</feature>
<feature type="binding site" evidence="1">
    <location>
        <begin position="44"/>
        <end position="51"/>
    </location>
    <ligand>
        <name>GTP</name>
        <dbReference type="ChEBI" id="CHEBI:37565"/>
    </ligand>
</feature>
<feature type="binding site" evidence="1">
    <location>
        <position position="51"/>
    </location>
    <ligand>
        <name>Mg(2+)</name>
        <dbReference type="ChEBI" id="CHEBI:18420"/>
    </ligand>
</feature>
<feature type="binding site" evidence="1">
    <location>
        <begin position="70"/>
        <end position="74"/>
    </location>
    <ligand>
        <name>GTP</name>
        <dbReference type="ChEBI" id="CHEBI:37565"/>
    </ligand>
</feature>
<feature type="binding site" evidence="1">
    <location>
        <position position="72"/>
    </location>
    <ligand>
        <name>Mg(2+)</name>
        <dbReference type="ChEBI" id="CHEBI:18420"/>
    </ligand>
</feature>
<feature type="binding site" evidence="1">
    <location>
        <begin position="88"/>
        <end position="91"/>
    </location>
    <ligand>
        <name>GTP</name>
        <dbReference type="ChEBI" id="CHEBI:37565"/>
    </ligand>
</feature>
<feature type="binding site" evidence="1">
    <location>
        <begin position="155"/>
        <end position="158"/>
    </location>
    <ligand>
        <name>GTP</name>
        <dbReference type="ChEBI" id="CHEBI:37565"/>
    </ligand>
</feature>
<feature type="binding site" evidence="1">
    <location>
        <begin position="182"/>
        <end position="184"/>
    </location>
    <ligand>
        <name>GTP</name>
        <dbReference type="ChEBI" id="CHEBI:37565"/>
    </ligand>
</feature>
<evidence type="ECO:0000255" key="1">
    <source>
        <dbReference type="HAMAP-Rule" id="MF_00321"/>
    </source>
</evidence>
<reference key="1">
    <citation type="journal article" date="2005" name="J. Bacteriol.">
        <title>Swine and poultry pathogens: the complete genome sequences of two strains of Mycoplasma hyopneumoniae and a strain of Mycoplasma synoviae.</title>
        <authorList>
            <person name="Vasconcelos A.T.R."/>
            <person name="Ferreira H.B."/>
            <person name="Bizarro C.V."/>
            <person name="Bonatto S.L."/>
            <person name="Carvalho M.O."/>
            <person name="Pinto P.M."/>
            <person name="Almeida D.F."/>
            <person name="Almeida L.G.P."/>
            <person name="Almeida R."/>
            <person name="Alves-Junior L."/>
            <person name="Assuncao E.N."/>
            <person name="Azevedo V.A.C."/>
            <person name="Bogo M.R."/>
            <person name="Brigido M.M."/>
            <person name="Brocchi M."/>
            <person name="Burity H.A."/>
            <person name="Camargo A.A."/>
            <person name="Camargo S.S."/>
            <person name="Carepo M.S."/>
            <person name="Carraro D.M."/>
            <person name="de Mattos Cascardo J.C."/>
            <person name="Castro L.A."/>
            <person name="Cavalcanti G."/>
            <person name="Chemale G."/>
            <person name="Collevatti R.G."/>
            <person name="Cunha C.W."/>
            <person name="Dallagiovanna B."/>
            <person name="Dambros B.P."/>
            <person name="Dellagostin O.A."/>
            <person name="Falcao C."/>
            <person name="Fantinatti-Garboggini F."/>
            <person name="Felipe M.S.S."/>
            <person name="Fiorentin L."/>
            <person name="Franco G.R."/>
            <person name="Freitas N.S.A."/>
            <person name="Frias D."/>
            <person name="Grangeiro T.B."/>
            <person name="Grisard E.C."/>
            <person name="Guimaraes C.T."/>
            <person name="Hungria M."/>
            <person name="Jardim S.N."/>
            <person name="Krieger M.A."/>
            <person name="Laurino J.P."/>
            <person name="Lima L.F.A."/>
            <person name="Lopes M.I."/>
            <person name="Loreto E.L.S."/>
            <person name="Madeira H.M.F."/>
            <person name="Manfio G.P."/>
            <person name="Maranhao A.Q."/>
            <person name="Martinkovics C.T."/>
            <person name="Medeiros S.R.B."/>
            <person name="Moreira M.A.M."/>
            <person name="Neiva M."/>
            <person name="Ramalho-Neto C.E."/>
            <person name="Nicolas M.F."/>
            <person name="Oliveira S.C."/>
            <person name="Paixao R.F.C."/>
            <person name="Pedrosa F.O."/>
            <person name="Pena S.D.J."/>
            <person name="Pereira M."/>
            <person name="Pereira-Ferrari L."/>
            <person name="Piffer I."/>
            <person name="Pinto L.S."/>
            <person name="Potrich D.P."/>
            <person name="Salim A.C.M."/>
            <person name="Santos F.R."/>
            <person name="Schmitt R."/>
            <person name="Schneider M.P.C."/>
            <person name="Schrank A."/>
            <person name="Schrank I.S."/>
            <person name="Schuck A.F."/>
            <person name="Seuanez H.N."/>
            <person name="Silva D.W."/>
            <person name="Silva R."/>
            <person name="Silva S.C."/>
            <person name="Soares C.M.A."/>
            <person name="Souza K.R.L."/>
            <person name="Souza R.C."/>
            <person name="Staats C.C."/>
            <person name="Steffens M.B.R."/>
            <person name="Teixeira S.M.R."/>
            <person name="Urmenyi T.P."/>
            <person name="Vainstein M.H."/>
            <person name="Zuccherato L.W."/>
            <person name="Simpson A.J.G."/>
            <person name="Zaha A."/>
        </authorList>
    </citation>
    <scope>NUCLEOTIDE SEQUENCE [LARGE SCALE GENOMIC DNA]</scope>
    <source>
        <strain>J / ATCC 25934 / NCTC 10110</strain>
    </source>
</reference>
<gene>
    <name evidence="1" type="primary">engB</name>
    <name type="ordered locus">MHJ_0446</name>
</gene>
<sequence length="198" mass="22739">MVKCKLFFWLISWFLKVKNGEKVWKFLRSCPENCYSDPQFAFIGRSNVGKSTLINALANKKIAKTSTKPGRTQLLNFYKNESEKLFVDLPGYGYAAVSKTKKDQIDRIIAGYFQKDQPISAVFLILDARVGFTNLDYIMIEYIIKQGFKLHILANKIDKTNQSTRAILLNQCKKLKLNCLLISAKNKNNLSKLQELLE</sequence>
<organism>
    <name type="scientific">Mesomycoplasma hyopneumoniae (strain J / ATCC 25934 / NCTC 10110)</name>
    <name type="common">Mycoplasma hyopneumoniae</name>
    <dbReference type="NCBI Taxonomy" id="262719"/>
    <lineage>
        <taxon>Bacteria</taxon>
        <taxon>Bacillati</taxon>
        <taxon>Mycoplasmatota</taxon>
        <taxon>Mycoplasmoidales</taxon>
        <taxon>Metamycoplasmataceae</taxon>
        <taxon>Mesomycoplasma</taxon>
    </lineage>
</organism>
<name>ENGB_MESHJ</name>
<proteinExistence type="inferred from homology"/>
<dbReference type="EMBL" id="AE017243">
    <property type="protein sequence ID" value="AAZ44532.2"/>
    <property type="molecule type" value="Genomic_DNA"/>
</dbReference>
<dbReference type="RefSeq" id="WP_044284668.1">
    <property type="nucleotide sequence ID" value="NC_007295.1"/>
</dbReference>
<dbReference type="SMR" id="Q4A9N9"/>
<dbReference type="GeneID" id="41334744"/>
<dbReference type="KEGG" id="mhj:MHJ_0446"/>
<dbReference type="eggNOG" id="COG0218">
    <property type="taxonomic scope" value="Bacteria"/>
</dbReference>
<dbReference type="HOGENOM" id="CLU_033732_3_2_14"/>
<dbReference type="OrthoDB" id="9804921at2"/>
<dbReference type="Proteomes" id="UP000000548">
    <property type="component" value="Chromosome"/>
</dbReference>
<dbReference type="GO" id="GO:0005829">
    <property type="term" value="C:cytosol"/>
    <property type="evidence" value="ECO:0007669"/>
    <property type="project" value="TreeGrafter"/>
</dbReference>
<dbReference type="GO" id="GO:0005525">
    <property type="term" value="F:GTP binding"/>
    <property type="evidence" value="ECO:0007669"/>
    <property type="project" value="UniProtKB-UniRule"/>
</dbReference>
<dbReference type="GO" id="GO:0046872">
    <property type="term" value="F:metal ion binding"/>
    <property type="evidence" value="ECO:0007669"/>
    <property type="project" value="UniProtKB-KW"/>
</dbReference>
<dbReference type="GO" id="GO:0000917">
    <property type="term" value="P:division septum assembly"/>
    <property type="evidence" value="ECO:0007669"/>
    <property type="project" value="UniProtKB-KW"/>
</dbReference>
<dbReference type="CDD" id="cd01876">
    <property type="entry name" value="YihA_EngB"/>
    <property type="match status" value="1"/>
</dbReference>
<dbReference type="Gene3D" id="3.40.50.300">
    <property type="entry name" value="P-loop containing nucleotide triphosphate hydrolases"/>
    <property type="match status" value="1"/>
</dbReference>
<dbReference type="HAMAP" id="MF_00321">
    <property type="entry name" value="GTPase_EngB"/>
    <property type="match status" value="1"/>
</dbReference>
<dbReference type="InterPro" id="IPR030393">
    <property type="entry name" value="G_ENGB_dom"/>
</dbReference>
<dbReference type="InterPro" id="IPR006073">
    <property type="entry name" value="GTP-bd"/>
</dbReference>
<dbReference type="InterPro" id="IPR019987">
    <property type="entry name" value="GTP-bd_ribosome_bio_YsxC"/>
</dbReference>
<dbReference type="InterPro" id="IPR027417">
    <property type="entry name" value="P-loop_NTPase"/>
</dbReference>
<dbReference type="InterPro" id="IPR005225">
    <property type="entry name" value="Small_GTP-bd"/>
</dbReference>
<dbReference type="NCBIfam" id="TIGR03598">
    <property type="entry name" value="GTPase_YsxC"/>
    <property type="match status" value="1"/>
</dbReference>
<dbReference type="NCBIfam" id="TIGR00231">
    <property type="entry name" value="small_GTP"/>
    <property type="match status" value="1"/>
</dbReference>
<dbReference type="PANTHER" id="PTHR11649:SF13">
    <property type="entry name" value="ENGB-TYPE G DOMAIN-CONTAINING PROTEIN"/>
    <property type="match status" value="1"/>
</dbReference>
<dbReference type="PANTHER" id="PTHR11649">
    <property type="entry name" value="MSS1/TRME-RELATED GTP-BINDING PROTEIN"/>
    <property type="match status" value="1"/>
</dbReference>
<dbReference type="Pfam" id="PF01926">
    <property type="entry name" value="MMR_HSR1"/>
    <property type="match status" value="1"/>
</dbReference>
<dbReference type="SUPFAM" id="SSF52540">
    <property type="entry name" value="P-loop containing nucleoside triphosphate hydrolases"/>
    <property type="match status" value="1"/>
</dbReference>
<dbReference type="PROSITE" id="PS51706">
    <property type="entry name" value="G_ENGB"/>
    <property type="match status" value="1"/>
</dbReference>
<comment type="function">
    <text evidence="1">Necessary for normal cell division and for the maintenance of normal septation.</text>
</comment>
<comment type="cofactor">
    <cofactor evidence="1">
        <name>Mg(2+)</name>
        <dbReference type="ChEBI" id="CHEBI:18420"/>
    </cofactor>
</comment>
<comment type="similarity">
    <text evidence="1">Belongs to the TRAFAC class TrmE-Era-EngA-EngB-Septin-like GTPase superfamily. EngB GTPase family.</text>
</comment>
<protein>
    <recommendedName>
        <fullName evidence="1">Probable GTP-binding protein EngB</fullName>
    </recommendedName>
</protein>
<keyword id="KW-0131">Cell cycle</keyword>
<keyword id="KW-0132">Cell division</keyword>
<keyword id="KW-0342">GTP-binding</keyword>
<keyword id="KW-0460">Magnesium</keyword>
<keyword id="KW-0479">Metal-binding</keyword>
<keyword id="KW-0547">Nucleotide-binding</keyword>
<keyword id="KW-0717">Septation</keyword>
<accession>Q4A9N9</accession>